<gene>
    <name evidence="2" type="primary">ZDHHC4</name>
</gene>
<organism>
    <name type="scientific">Bos taurus</name>
    <name type="common">Bovine</name>
    <dbReference type="NCBI Taxonomy" id="9913"/>
    <lineage>
        <taxon>Eukaryota</taxon>
        <taxon>Metazoa</taxon>
        <taxon>Chordata</taxon>
        <taxon>Craniata</taxon>
        <taxon>Vertebrata</taxon>
        <taxon>Euteleostomi</taxon>
        <taxon>Mammalia</taxon>
        <taxon>Eutheria</taxon>
        <taxon>Laurasiatheria</taxon>
        <taxon>Artiodactyla</taxon>
        <taxon>Ruminantia</taxon>
        <taxon>Pecora</taxon>
        <taxon>Bovidae</taxon>
        <taxon>Bovinae</taxon>
        <taxon>Bos</taxon>
    </lineage>
</organism>
<protein>
    <recommendedName>
        <fullName evidence="5">Palmitoyltransferase ZDHHC4</fullName>
        <ecNumber evidence="2">2.3.1.225</ecNumber>
    </recommendedName>
    <alternativeName>
        <fullName evidence="2">Zinc finger DHHC domain-containing protein 4</fullName>
        <shortName>DHHC-4</shortName>
    </alternativeName>
</protein>
<comment type="function">
    <text evidence="2">Palmitoyltransferase that could catalyze the addition of palmitate onto protein substrates including the D(2) dopamine receptor DRD2, GSK3B or MAVS. Mediates GSK3B palmitoylation to prevent its AKT1-mediated phosphorylation leading to activation of the STAT3 signaling pathway. Also catalyzes MAVS palmitoylation which promotes its stabilization and activation by inhibiting 'Lys-48'- but facilitating 'Lys-63'-linked ubiquitination.</text>
</comment>
<comment type="catalytic activity">
    <reaction evidence="2">
        <text>L-cysteinyl-[protein] + hexadecanoyl-CoA = S-hexadecanoyl-L-cysteinyl-[protein] + CoA</text>
        <dbReference type="Rhea" id="RHEA:36683"/>
        <dbReference type="Rhea" id="RHEA-COMP:10131"/>
        <dbReference type="Rhea" id="RHEA-COMP:11032"/>
        <dbReference type="ChEBI" id="CHEBI:29950"/>
        <dbReference type="ChEBI" id="CHEBI:57287"/>
        <dbReference type="ChEBI" id="CHEBI:57379"/>
        <dbReference type="ChEBI" id="CHEBI:74151"/>
        <dbReference type="EC" id="2.3.1.225"/>
    </reaction>
    <physiologicalReaction direction="left-to-right" evidence="2">
        <dbReference type="Rhea" id="RHEA:36684"/>
    </physiologicalReaction>
</comment>
<comment type="subunit">
    <text evidence="2">Interacts with CPT1A.</text>
</comment>
<comment type="subcellular location">
    <subcellularLocation>
        <location evidence="2">Endoplasmic reticulum membrane</location>
        <topology evidence="3">Multi-pass membrane protein</topology>
    </subcellularLocation>
    <subcellularLocation>
        <location evidence="2">Golgi apparatus membrane</location>
        <topology evidence="3">Multi-pass membrane protein</topology>
    </subcellularLocation>
    <subcellularLocation>
        <location evidence="2">Cell membrane</location>
        <topology evidence="3">Multi-pass membrane protein</topology>
    </subcellularLocation>
</comment>
<comment type="domain">
    <text evidence="2">The C-terminal di-lysine motif confers endoplasmic reticulum localization.</text>
</comment>
<comment type="domain">
    <text evidence="1">The DHHC domain is required for palmitoyltransferase activity.</text>
</comment>
<comment type="similarity">
    <text evidence="5">Belongs to the DHHC palmitoyltransferase family.</text>
</comment>
<accession>Q58DT3</accession>
<name>ZDHC4_BOVIN</name>
<dbReference type="EC" id="2.3.1.225" evidence="2"/>
<dbReference type="EMBL" id="BT021514">
    <property type="protein sequence ID" value="AAX46361.1"/>
    <property type="molecule type" value="mRNA"/>
</dbReference>
<dbReference type="RefSeq" id="NP_001030369.1">
    <property type="nucleotide sequence ID" value="NM_001035292.1"/>
</dbReference>
<dbReference type="FunCoup" id="Q58DT3">
    <property type="interactions" value="2565"/>
</dbReference>
<dbReference type="STRING" id="9913.ENSBTAP00000012560"/>
<dbReference type="PaxDb" id="9913-ENSBTAP00000012560"/>
<dbReference type="GeneID" id="514338"/>
<dbReference type="KEGG" id="bta:514338"/>
<dbReference type="CTD" id="55146"/>
<dbReference type="eggNOG" id="KOG1312">
    <property type="taxonomic scope" value="Eukaryota"/>
</dbReference>
<dbReference type="InParanoid" id="Q58DT3"/>
<dbReference type="OrthoDB" id="331948at2759"/>
<dbReference type="Proteomes" id="UP000009136">
    <property type="component" value="Unplaced"/>
</dbReference>
<dbReference type="GO" id="GO:0005783">
    <property type="term" value="C:endoplasmic reticulum"/>
    <property type="evidence" value="ECO:0000250"/>
    <property type="project" value="UniProtKB"/>
</dbReference>
<dbReference type="GO" id="GO:0005789">
    <property type="term" value="C:endoplasmic reticulum membrane"/>
    <property type="evidence" value="ECO:0007669"/>
    <property type="project" value="UniProtKB-SubCell"/>
</dbReference>
<dbReference type="GO" id="GO:0005794">
    <property type="term" value="C:Golgi apparatus"/>
    <property type="evidence" value="ECO:0000318"/>
    <property type="project" value="GO_Central"/>
</dbReference>
<dbReference type="GO" id="GO:0000139">
    <property type="term" value="C:Golgi membrane"/>
    <property type="evidence" value="ECO:0007669"/>
    <property type="project" value="UniProtKB-SubCell"/>
</dbReference>
<dbReference type="GO" id="GO:0005886">
    <property type="term" value="C:plasma membrane"/>
    <property type="evidence" value="ECO:0007669"/>
    <property type="project" value="UniProtKB-SubCell"/>
</dbReference>
<dbReference type="GO" id="GO:0019706">
    <property type="term" value="F:protein-cysteine S-palmitoyltransferase activity"/>
    <property type="evidence" value="ECO:0000318"/>
    <property type="project" value="GO_Central"/>
</dbReference>
<dbReference type="GO" id="GO:0006612">
    <property type="term" value="P:protein targeting to membrane"/>
    <property type="evidence" value="ECO:0000318"/>
    <property type="project" value="GO_Central"/>
</dbReference>
<dbReference type="InterPro" id="IPR001594">
    <property type="entry name" value="Palmitoyltrfase_DHHC"/>
</dbReference>
<dbReference type="InterPro" id="IPR039859">
    <property type="entry name" value="PFA4/ZDH16/20/ERF2-like"/>
</dbReference>
<dbReference type="PANTHER" id="PTHR22883:SF466">
    <property type="entry name" value="PALMITOYLTRANSFERASE ZDHHC4"/>
    <property type="match status" value="1"/>
</dbReference>
<dbReference type="PANTHER" id="PTHR22883">
    <property type="entry name" value="ZINC FINGER DHHC DOMAIN CONTAINING PROTEIN"/>
    <property type="match status" value="1"/>
</dbReference>
<dbReference type="Pfam" id="PF01529">
    <property type="entry name" value="DHHC"/>
    <property type="match status" value="1"/>
</dbReference>
<dbReference type="PROSITE" id="PS50216">
    <property type="entry name" value="DHHC"/>
    <property type="match status" value="1"/>
</dbReference>
<proteinExistence type="evidence at transcript level"/>
<sequence>MDFLVLFLLYLALVLLGFVMICIGSKTHYLQGLISRGAQVFSYIIPECLQRAMLSVLHYLFHTRNYTFVVLHLILQGMVYTEYTWEIFGLCQQLEFSLYYLFLPYLLLIVNLLFFTLSCVTNPGTITKANELLFLQVYEFDGVMFPKNVRCPTCDLRKPARSKHCSVCNRCVHRFDHHCVWVNNCIGAWNTRYFLSYLFTLTASAATMAVVSTVFLVRLVVMSDVYLQTYVDDLGHLQVVDTVFLVQYLFLTFPRIVFLVGFVVVLSFLLGGYLCFCLYLAATNQTTNEWYKGDRAWCQHCPHVARPPAAEPQAYRNIHSHGLWSNLREIFLPATACYERKEK</sequence>
<keyword id="KW-0012">Acyltransferase</keyword>
<keyword id="KW-1003">Cell membrane</keyword>
<keyword id="KW-0256">Endoplasmic reticulum</keyword>
<keyword id="KW-0333">Golgi apparatus</keyword>
<keyword id="KW-0449">Lipoprotein</keyword>
<keyword id="KW-0472">Membrane</keyword>
<keyword id="KW-0564">Palmitate</keyword>
<keyword id="KW-1185">Reference proteome</keyword>
<keyword id="KW-0808">Transferase</keyword>
<keyword id="KW-0812">Transmembrane</keyword>
<keyword id="KW-1133">Transmembrane helix</keyword>
<feature type="chain" id="PRO_0000212864" description="Palmitoyltransferase ZDHHC4">
    <location>
        <begin position="1"/>
        <end position="343"/>
    </location>
</feature>
<feature type="topological domain" description="Lumenal" evidence="5">
    <location>
        <begin position="1"/>
        <end position="2"/>
    </location>
</feature>
<feature type="transmembrane region" description="Helical" evidence="3">
    <location>
        <begin position="3"/>
        <end position="23"/>
    </location>
</feature>
<feature type="topological domain" description="Cytoplasmic" evidence="5">
    <location>
        <begin position="24"/>
        <end position="67"/>
    </location>
</feature>
<feature type="transmembrane region" description="Helical" evidence="3">
    <location>
        <begin position="68"/>
        <end position="88"/>
    </location>
</feature>
<feature type="topological domain" description="Lumenal" evidence="5">
    <location>
        <begin position="89"/>
        <end position="95"/>
    </location>
</feature>
<feature type="transmembrane region" description="Helical" evidence="3">
    <location>
        <begin position="96"/>
        <end position="116"/>
    </location>
</feature>
<feature type="topological domain" description="Cytoplasmic" evidence="5">
    <location>
        <begin position="117"/>
        <end position="196"/>
    </location>
</feature>
<feature type="transmembrane region" description="Helical" evidence="3">
    <location>
        <begin position="197"/>
        <end position="217"/>
    </location>
</feature>
<feature type="topological domain" description="Lumenal" evidence="5">
    <location>
        <begin position="218"/>
        <end position="255"/>
    </location>
</feature>
<feature type="transmembrane region" description="Helical" evidence="3">
    <location>
        <begin position="256"/>
        <end position="276"/>
    </location>
</feature>
<feature type="topological domain" description="Cytoplasmic" evidence="5">
    <location>
        <begin position="277"/>
        <end position="343"/>
    </location>
</feature>
<feature type="domain" description="DHHC" evidence="4">
    <location>
        <begin position="149"/>
        <end position="199"/>
    </location>
</feature>
<feature type="short sequence motif" description="Di-lysine motif" evidence="2">
    <location>
        <begin position="340"/>
        <end position="343"/>
    </location>
</feature>
<feature type="active site" description="S-palmitoyl cysteine intermediate" evidence="4">
    <location>
        <position position="179"/>
    </location>
</feature>
<reference key="1">
    <citation type="journal article" date="2005" name="BMC Genomics">
        <title>Characterization of 954 bovine full-CDS cDNA sequences.</title>
        <authorList>
            <person name="Harhay G.P."/>
            <person name="Sonstegard T.S."/>
            <person name="Keele J.W."/>
            <person name="Heaton M.P."/>
            <person name="Clawson M.L."/>
            <person name="Snelling W.M."/>
            <person name="Wiedmann R.T."/>
            <person name="Van Tassell C.P."/>
            <person name="Smith T.P.L."/>
        </authorList>
    </citation>
    <scope>NUCLEOTIDE SEQUENCE [LARGE SCALE MRNA]</scope>
</reference>
<evidence type="ECO:0000250" key="1">
    <source>
        <dbReference type="UniProtKB" id="Q8IUH5"/>
    </source>
</evidence>
<evidence type="ECO:0000250" key="2">
    <source>
        <dbReference type="UniProtKB" id="Q9NPG8"/>
    </source>
</evidence>
<evidence type="ECO:0000255" key="3"/>
<evidence type="ECO:0000255" key="4">
    <source>
        <dbReference type="PROSITE-ProRule" id="PRU00067"/>
    </source>
</evidence>
<evidence type="ECO:0000305" key="5"/>